<proteinExistence type="predicted"/>
<organismHost>
    <name type="scientific">Bacillus subtilis</name>
    <dbReference type="NCBI Taxonomy" id="1423"/>
</organismHost>
<protein>
    <recommendedName>
        <fullName>Uncharacterized immunity region protein 8</fullName>
    </recommendedName>
</protein>
<dbReference type="EMBL" id="M11920">
    <property type="status" value="NOT_ANNOTATED_CDS"/>
    <property type="molecule type" value="Genomic_DNA"/>
</dbReference>
<dbReference type="PIR" id="G24521">
    <property type="entry name" value="IMBP8"/>
</dbReference>
<dbReference type="SMR" id="P10431"/>
<reference key="1">
    <citation type="journal article" date="1985" name="Gene">
        <title>Nucleotide sequence of the immunity region of Bacillus subtilis bacteriophage phi 105: identification of the repressor gene and its mRNA and protein products.</title>
        <authorList>
            <person name="Cully D.F."/>
            <person name="Garro A.J."/>
        </authorList>
    </citation>
    <scope>NUCLEOTIDE SEQUENCE [GENOMIC DNA]</scope>
</reference>
<sequence length="44" mass="5574">MEFIVVLLLLLRYFRLALKVRILHIFYKCFFEFFLTYSNCRFFV</sequence>
<organism>
    <name type="scientific">Bacillus phage phi105</name>
    <name type="common">Bacteriophage phi-105</name>
    <dbReference type="NCBI Taxonomy" id="10717"/>
    <lineage>
        <taxon>Viruses</taxon>
        <taxon>Duplodnaviria</taxon>
        <taxon>Heunggongvirae</taxon>
        <taxon>Uroviricota</taxon>
        <taxon>Caudoviricetes</taxon>
        <taxon>Spizizenvirus</taxon>
        <taxon>Spizizenvirus sv105</taxon>
    </lineage>
</organism>
<feature type="chain" id="PRO_0000077725" description="Uncharacterized immunity region protein 8">
    <location>
        <begin position="1"/>
        <end position="44"/>
    </location>
</feature>
<accession>P10431</accession>
<name>YIM8_BPPH1</name>